<gene>
    <name type="primary">yhcO</name>
    <name type="ordered locus">BSU09165</name>
    <name type="ORF">BSU09160/BSU09170</name>
</gene>
<comment type="caution">
    <text evidence="3">Was initially thought to be two separate ORFs named yhcO and yhcP.</text>
</comment>
<comment type="sequence caution" evidence="2">
    <conflict type="erroneous initiation">
        <sequence resource="EMBL-CDS" id="CAA65699"/>
    </conflict>
    <text>Truncated N-terminus.</text>
</comment>
<comment type="sequence caution" evidence="2">
    <conflict type="frameshift">
        <sequence resource="EMBL-CDS" id="CAA65699"/>
    </conflict>
</comment>
<comment type="sequence caution" evidence="2">
    <conflict type="erroneous initiation">
        <sequence resource="EMBL-CDS" id="CAA65700"/>
    </conflict>
    <text>Truncated N-terminus.</text>
</comment>
<comment type="sequence caution" evidence="2">
    <conflict type="frameshift">
        <sequence resource="EMBL-CDS" id="CAA65700"/>
    </conflict>
</comment>
<name>YHCO_BACSU</name>
<reference key="1">
    <citation type="journal article" date="1996" name="Microbiology">
        <title>A 22 kb DNA sequence in the cspB-glpPFKD region at 75 degrees on the Bacillus subtilis chromosome.</title>
        <authorList>
            <person name="Noback M.A."/>
            <person name="Terpstra P."/>
            <person name="Holsappel S."/>
            <person name="Venema G."/>
            <person name="Bron S."/>
        </authorList>
    </citation>
    <scope>NUCLEOTIDE SEQUENCE [GENOMIC DNA]</scope>
    <source>
        <strain>168</strain>
    </source>
</reference>
<reference key="2">
    <citation type="journal article" date="1997" name="Nature">
        <title>The complete genome sequence of the Gram-positive bacterium Bacillus subtilis.</title>
        <authorList>
            <person name="Kunst F."/>
            <person name="Ogasawara N."/>
            <person name="Moszer I."/>
            <person name="Albertini A.M."/>
            <person name="Alloni G."/>
            <person name="Azevedo V."/>
            <person name="Bertero M.G."/>
            <person name="Bessieres P."/>
            <person name="Bolotin A."/>
            <person name="Borchert S."/>
            <person name="Borriss R."/>
            <person name="Boursier L."/>
            <person name="Brans A."/>
            <person name="Braun M."/>
            <person name="Brignell S.C."/>
            <person name="Bron S."/>
            <person name="Brouillet S."/>
            <person name="Bruschi C.V."/>
            <person name="Caldwell B."/>
            <person name="Capuano V."/>
            <person name="Carter N.M."/>
            <person name="Choi S.-K."/>
            <person name="Codani J.-J."/>
            <person name="Connerton I.F."/>
            <person name="Cummings N.J."/>
            <person name="Daniel R.A."/>
            <person name="Denizot F."/>
            <person name="Devine K.M."/>
            <person name="Duesterhoeft A."/>
            <person name="Ehrlich S.D."/>
            <person name="Emmerson P.T."/>
            <person name="Entian K.-D."/>
            <person name="Errington J."/>
            <person name="Fabret C."/>
            <person name="Ferrari E."/>
            <person name="Foulger D."/>
            <person name="Fritz C."/>
            <person name="Fujita M."/>
            <person name="Fujita Y."/>
            <person name="Fuma S."/>
            <person name="Galizzi A."/>
            <person name="Galleron N."/>
            <person name="Ghim S.-Y."/>
            <person name="Glaser P."/>
            <person name="Goffeau A."/>
            <person name="Golightly E.J."/>
            <person name="Grandi G."/>
            <person name="Guiseppi G."/>
            <person name="Guy B.J."/>
            <person name="Haga K."/>
            <person name="Haiech J."/>
            <person name="Harwood C.R."/>
            <person name="Henaut A."/>
            <person name="Hilbert H."/>
            <person name="Holsappel S."/>
            <person name="Hosono S."/>
            <person name="Hullo M.-F."/>
            <person name="Itaya M."/>
            <person name="Jones L.-M."/>
            <person name="Joris B."/>
            <person name="Karamata D."/>
            <person name="Kasahara Y."/>
            <person name="Klaerr-Blanchard M."/>
            <person name="Klein C."/>
            <person name="Kobayashi Y."/>
            <person name="Koetter P."/>
            <person name="Koningstein G."/>
            <person name="Krogh S."/>
            <person name="Kumano M."/>
            <person name="Kurita K."/>
            <person name="Lapidus A."/>
            <person name="Lardinois S."/>
            <person name="Lauber J."/>
            <person name="Lazarevic V."/>
            <person name="Lee S.-M."/>
            <person name="Levine A."/>
            <person name="Liu H."/>
            <person name="Masuda S."/>
            <person name="Mauel C."/>
            <person name="Medigue C."/>
            <person name="Medina N."/>
            <person name="Mellado R.P."/>
            <person name="Mizuno M."/>
            <person name="Moestl D."/>
            <person name="Nakai S."/>
            <person name="Noback M."/>
            <person name="Noone D."/>
            <person name="O'Reilly M."/>
            <person name="Ogawa K."/>
            <person name="Ogiwara A."/>
            <person name="Oudega B."/>
            <person name="Park S.-H."/>
            <person name="Parro V."/>
            <person name="Pohl T.M."/>
            <person name="Portetelle D."/>
            <person name="Porwollik S."/>
            <person name="Prescott A.M."/>
            <person name="Presecan E."/>
            <person name="Pujic P."/>
            <person name="Purnelle B."/>
            <person name="Rapoport G."/>
            <person name="Rey M."/>
            <person name="Reynolds S."/>
            <person name="Rieger M."/>
            <person name="Rivolta C."/>
            <person name="Rocha E."/>
            <person name="Roche B."/>
            <person name="Rose M."/>
            <person name="Sadaie Y."/>
            <person name="Sato T."/>
            <person name="Scanlan E."/>
            <person name="Schleich S."/>
            <person name="Schroeter R."/>
            <person name="Scoffone F."/>
            <person name="Sekiguchi J."/>
            <person name="Sekowska A."/>
            <person name="Seror S.J."/>
            <person name="Serror P."/>
            <person name="Shin B.-S."/>
            <person name="Soldo B."/>
            <person name="Sorokin A."/>
            <person name="Tacconi E."/>
            <person name="Takagi T."/>
            <person name="Takahashi H."/>
            <person name="Takemaru K."/>
            <person name="Takeuchi M."/>
            <person name="Tamakoshi A."/>
            <person name="Tanaka T."/>
            <person name="Terpstra P."/>
            <person name="Tognoni A."/>
            <person name="Tosato V."/>
            <person name="Uchiyama S."/>
            <person name="Vandenbol M."/>
            <person name="Vannier F."/>
            <person name="Vassarotti A."/>
            <person name="Viari A."/>
            <person name="Wambutt R."/>
            <person name="Wedler E."/>
            <person name="Wedler H."/>
            <person name="Weitzenegger T."/>
            <person name="Winters P."/>
            <person name="Wipat A."/>
            <person name="Yamamoto H."/>
            <person name="Yamane K."/>
            <person name="Yasumoto K."/>
            <person name="Yata K."/>
            <person name="Yoshida K."/>
            <person name="Yoshikawa H.-F."/>
            <person name="Zumstein E."/>
            <person name="Yoshikawa H."/>
            <person name="Danchin A."/>
        </authorList>
    </citation>
    <scope>NUCLEOTIDE SEQUENCE [LARGE SCALE GENOMIC DNA]</scope>
    <source>
        <strain>168</strain>
    </source>
</reference>
<reference key="3">
    <citation type="journal article" date="2009" name="Microbiology">
        <title>From a consortium sequence to a unified sequence: the Bacillus subtilis 168 reference genome a decade later.</title>
        <authorList>
            <person name="Barbe V."/>
            <person name="Cruveiller S."/>
            <person name="Kunst F."/>
            <person name="Lenoble P."/>
            <person name="Meurice G."/>
            <person name="Sekowska A."/>
            <person name="Vallenet D."/>
            <person name="Wang T."/>
            <person name="Moszer I."/>
            <person name="Medigue C."/>
            <person name="Danchin A."/>
        </authorList>
    </citation>
    <scope>SEQUENCE REVISION</scope>
</reference>
<keyword id="KW-1185">Reference proteome</keyword>
<keyword id="KW-0732">Signal</keyword>
<feature type="signal peptide" evidence="1">
    <location>
        <begin position="1"/>
        <end position="32"/>
    </location>
</feature>
<feature type="chain" id="PRO_0000049563" description="Uncharacterized protein YhcO">
    <location>
        <begin position="33"/>
        <end position="322"/>
    </location>
</feature>
<protein>
    <recommendedName>
        <fullName>Uncharacterized protein YhcO</fullName>
    </recommendedName>
</protein>
<organism>
    <name type="scientific">Bacillus subtilis (strain 168)</name>
    <dbReference type="NCBI Taxonomy" id="224308"/>
    <lineage>
        <taxon>Bacteria</taxon>
        <taxon>Bacillati</taxon>
        <taxon>Bacillota</taxon>
        <taxon>Bacilli</taxon>
        <taxon>Bacillales</taxon>
        <taxon>Bacillaceae</taxon>
        <taxon>Bacillus</taxon>
    </lineage>
</organism>
<proteinExistence type="inferred from homology"/>
<dbReference type="EMBL" id="AL009126">
    <property type="protein sequence ID" value="CAB12744.2"/>
    <property type="molecule type" value="Genomic_DNA"/>
</dbReference>
<dbReference type="EMBL" id="X96983">
    <property type="protein sequence ID" value="CAA65700.1"/>
    <property type="status" value="ALT_SEQ"/>
    <property type="molecule type" value="Genomic_DNA"/>
</dbReference>
<dbReference type="EMBL" id="X96983">
    <property type="protein sequence ID" value="CAA65699.1"/>
    <property type="status" value="ALT_SEQ"/>
    <property type="molecule type" value="Genomic_DNA"/>
</dbReference>
<dbReference type="PIR" id="C69823">
    <property type="entry name" value="C69823"/>
</dbReference>
<dbReference type="PIR" id="D69823">
    <property type="entry name" value="D69823"/>
</dbReference>
<dbReference type="RefSeq" id="NP_388797.2">
    <property type="nucleotide sequence ID" value="NC_000964.3"/>
</dbReference>
<dbReference type="RefSeq" id="WP_003245770.1">
    <property type="nucleotide sequence ID" value="NZ_OZ025638.1"/>
</dbReference>
<dbReference type="SMR" id="P54599"/>
<dbReference type="FunCoup" id="P54599">
    <property type="interactions" value="17"/>
</dbReference>
<dbReference type="STRING" id="224308.BSU09165"/>
<dbReference type="PaxDb" id="224308-BSU09165"/>
<dbReference type="EnsemblBacteria" id="CAB12744">
    <property type="protein sequence ID" value="CAB12744"/>
    <property type="gene ID" value="BSU_09165"/>
</dbReference>
<dbReference type="GeneID" id="936243"/>
<dbReference type="KEGG" id="bsu:BSU09165"/>
<dbReference type="PATRIC" id="fig|224308.179.peg.990"/>
<dbReference type="eggNOG" id="ENOG50319YD">
    <property type="taxonomic scope" value="Bacteria"/>
</dbReference>
<dbReference type="InParanoid" id="P54599"/>
<dbReference type="OrthoDB" id="43895at2"/>
<dbReference type="BioCyc" id="BSUB:BSU09165-MONOMER"/>
<dbReference type="Proteomes" id="UP000001570">
    <property type="component" value="Chromosome"/>
</dbReference>
<evidence type="ECO:0000255" key="1"/>
<evidence type="ECO:0000305" key="2"/>
<evidence type="ECO:0000305" key="3">
    <source>
    </source>
</evidence>
<accession>P54599</accession>
<accession>P54600</accession>
<sequence>MRDGIGKRAASALFLCGVLVMLAVSSAIVSSAMYILSFPGQASGITKEQVTKHMKKESFKQADIYYTSKEKSLLPLTKETLEYAVSINQIMIGYSNQKPIDIIFFPNEKQMEAYSGLLDVVGFYSEREQLIGLLPEEKKKLLEGDEVAVYLYQRLLIHEYSHHAFHQKLKELETDPDEFPLWFHEGLSEWIANYELLIDPITFSVVPFDRLQTDRDWQEARAEYDTDVYLQSFYMIDELTDKYGKDIISEMIKETAKKGDFEKGFKSATKESLDQFEKDFKKKFEKNSAALDSIYPMPLLLVKSLLTHSALCRRHLSLGRGE</sequence>